<reference key="1">
    <citation type="submission" date="2006-11" db="EMBL/GenBank/DDBJ databases">
        <title>Sequence of Campylobacter fetus subsp. fetus 82-40.</title>
        <authorList>
            <person name="Fouts D.E."/>
            <person name="Nelson K.E."/>
        </authorList>
    </citation>
    <scope>NUCLEOTIDE SEQUENCE [LARGE SCALE GENOMIC DNA]</scope>
    <source>
        <strain>82-40</strain>
    </source>
</reference>
<name>Y424_CAMFF</name>
<gene>
    <name type="ordered locus">CFF8240_0424</name>
</gene>
<comment type="subcellular location">
    <subcellularLocation>
        <location evidence="1">Cytoplasm</location>
    </subcellularLocation>
</comment>
<comment type="similarity">
    <text evidence="1">Belongs to the TACO1 family.</text>
</comment>
<accession>A0RN42</accession>
<sequence length="235" mass="25747">MGRAFEYRRASKEARWDKMSKLFPKLSKAITVAAKEGGIDPDMNPKLRTAIATAKAQNMPKDNIDAAIKRANGKDSSDIKTIFYDGKAAHGVQIIVETATDNPTRTVANVKSIFSKNGGEMLPSGSLNFMFSRKAIFEVVKPSGDIEELELELIDAGLTDIEENDGTLTIYGDYTSFGTLSEGIEKMGLEVKKGSLQFIPNSTVNLDESAIGELERLLDKLEDDDDVQAVYTNIE</sequence>
<protein>
    <recommendedName>
        <fullName evidence="1">Probable transcriptional regulatory protein CFF8240_0424</fullName>
    </recommendedName>
</protein>
<organism>
    <name type="scientific">Campylobacter fetus subsp. fetus (strain 82-40)</name>
    <dbReference type="NCBI Taxonomy" id="360106"/>
    <lineage>
        <taxon>Bacteria</taxon>
        <taxon>Pseudomonadati</taxon>
        <taxon>Campylobacterota</taxon>
        <taxon>Epsilonproteobacteria</taxon>
        <taxon>Campylobacterales</taxon>
        <taxon>Campylobacteraceae</taxon>
        <taxon>Campylobacter</taxon>
    </lineage>
</organism>
<evidence type="ECO:0000255" key="1">
    <source>
        <dbReference type="HAMAP-Rule" id="MF_00693"/>
    </source>
</evidence>
<proteinExistence type="inferred from homology"/>
<feature type="chain" id="PRO_1000045291" description="Probable transcriptional regulatory protein CFF8240_0424">
    <location>
        <begin position="1"/>
        <end position="235"/>
    </location>
</feature>
<dbReference type="EMBL" id="CP000487">
    <property type="protein sequence ID" value="ABK81969.1"/>
    <property type="molecule type" value="Genomic_DNA"/>
</dbReference>
<dbReference type="RefSeq" id="WP_002848636.1">
    <property type="nucleotide sequence ID" value="NC_008599.1"/>
</dbReference>
<dbReference type="SMR" id="A0RN42"/>
<dbReference type="KEGG" id="cff:CFF8240_0424"/>
<dbReference type="eggNOG" id="COG0217">
    <property type="taxonomic scope" value="Bacteria"/>
</dbReference>
<dbReference type="HOGENOM" id="CLU_062974_2_2_7"/>
<dbReference type="Proteomes" id="UP000000760">
    <property type="component" value="Chromosome"/>
</dbReference>
<dbReference type="GO" id="GO:0005829">
    <property type="term" value="C:cytosol"/>
    <property type="evidence" value="ECO:0007669"/>
    <property type="project" value="TreeGrafter"/>
</dbReference>
<dbReference type="GO" id="GO:0003677">
    <property type="term" value="F:DNA binding"/>
    <property type="evidence" value="ECO:0007669"/>
    <property type="project" value="UniProtKB-UniRule"/>
</dbReference>
<dbReference type="GO" id="GO:0006355">
    <property type="term" value="P:regulation of DNA-templated transcription"/>
    <property type="evidence" value="ECO:0007669"/>
    <property type="project" value="UniProtKB-UniRule"/>
</dbReference>
<dbReference type="FunFam" id="1.10.10.200:FF:000004">
    <property type="entry name" value="Probable transcriptional regulatory protein BSBG_02618"/>
    <property type="match status" value="1"/>
</dbReference>
<dbReference type="Gene3D" id="1.10.10.200">
    <property type="match status" value="1"/>
</dbReference>
<dbReference type="Gene3D" id="3.30.70.980">
    <property type="match status" value="2"/>
</dbReference>
<dbReference type="HAMAP" id="MF_00693">
    <property type="entry name" value="Transcrip_reg_TACO1"/>
    <property type="match status" value="1"/>
</dbReference>
<dbReference type="InterPro" id="IPR017856">
    <property type="entry name" value="Integrase-like_N"/>
</dbReference>
<dbReference type="InterPro" id="IPR048300">
    <property type="entry name" value="TACO1_YebC-like_2nd/3rd_dom"/>
</dbReference>
<dbReference type="InterPro" id="IPR049083">
    <property type="entry name" value="TACO1_YebC_N"/>
</dbReference>
<dbReference type="InterPro" id="IPR002876">
    <property type="entry name" value="Transcrip_reg_TACO1-like"/>
</dbReference>
<dbReference type="InterPro" id="IPR026564">
    <property type="entry name" value="Transcrip_reg_TACO1-like_dom3"/>
</dbReference>
<dbReference type="InterPro" id="IPR029072">
    <property type="entry name" value="YebC-like"/>
</dbReference>
<dbReference type="NCBIfam" id="NF009044">
    <property type="entry name" value="PRK12378.1"/>
    <property type="match status" value="1"/>
</dbReference>
<dbReference type="NCBIfam" id="TIGR01033">
    <property type="entry name" value="YebC/PmpR family DNA-binding transcriptional regulator"/>
    <property type="match status" value="1"/>
</dbReference>
<dbReference type="PANTHER" id="PTHR12532:SF6">
    <property type="entry name" value="TRANSCRIPTIONAL REGULATORY PROTEIN YEBC-RELATED"/>
    <property type="match status" value="1"/>
</dbReference>
<dbReference type="PANTHER" id="PTHR12532">
    <property type="entry name" value="TRANSLATIONAL ACTIVATOR OF CYTOCHROME C OXIDASE 1"/>
    <property type="match status" value="1"/>
</dbReference>
<dbReference type="Pfam" id="PF20772">
    <property type="entry name" value="TACO1_YebC_N"/>
    <property type="match status" value="1"/>
</dbReference>
<dbReference type="Pfam" id="PF01709">
    <property type="entry name" value="Transcrip_reg"/>
    <property type="match status" value="1"/>
</dbReference>
<dbReference type="SUPFAM" id="SSF75625">
    <property type="entry name" value="YebC-like"/>
    <property type="match status" value="1"/>
</dbReference>
<keyword id="KW-0963">Cytoplasm</keyword>
<keyword id="KW-0238">DNA-binding</keyword>
<keyword id="KW-0804">Transcription</keyword>
<keyword id="KW-0805">Transcription regulation</keyword>